<comment type="function">
    <text evidence="1">Catalyzes the hydrolysis of N-succinyl-L,L-diaminopimelic acid (SDAP), forming succinate and LL-2,6-diaminopimelate (DAP), an intermediate involved in the bacterial biosynthesis of lysine and meso-diaminopimelic acid, an essential component of bacterial cell walls.</text>
</comment>
<comment type="catalytic activity">
    <reaction evidence="1">
        <text>N-succinyl-(2S,6S)-2,6-diaminopimelate + H2O = (2S,6S)-2,6-diaminopimelate + succinate</text>
        <dbReference type="Rhea" id="RHEA:22608"/>
        <dbReference type="ChEBI" id="CHEBI:15377"/>
        <dbReference type="ChEBI" id="CHEBI:30031"/>
        <dbReference type="ChEBI" id="CHEBI:57609"/>
        <dbReference type="ChEBI" id="CHEBI:58087"/>
        <dbReference type="EC" id="3.5.1.18"/>
    </reaction>
</comment>
<comment type="cofactor">
    <cofactor evidence="1">
        <name>Zn(2+)</name>
        <dbReference type="ChEBI" id="CHEBI:29105"/>
    </cofactor>
    <cofactor evidence="1">
        <name>Co(2+)</name>
        <dbReference type="ChEBI" id="CHEBI:48828"/>
    </cofactor>
    <text evidence="1">Binds 2 Zn(2+) or Co(2+) ions per subunit.</text>
</comment>
<comment type="pathway">
    <text evidence="1">Amino-acid biosynthesis; L-lysine biosynthesis via DAP pathway; LL-2,6-diaminopimelate from (S)-tetrahydrodipicolinate (succinylase route): step 3/3.</text>
</comment>
<comment type="subunit">
    <text evidence="1">Homodimer.</text>
</comment>
<comment type="similarity">
    <text evidence="1">Belongs to the peptidase M20A family. DapE subfamily.</text>
</comment>
<organism>
    <name type="scientific">Rickettsia felis (strain ATCC VR-1525 / URRWXCal2)</name>
    <name type="common">Rickettsia azadi</name>
    <dbReference type="NCBI Taxonomy" id="315456"/>
    <lineage>
        <taxon>Bacteria</taxon>
        <taxon>Pseudomonadati</taxon>
        <taxon>Pseudomonadota</taxon>
        <taxon>Alphaproteobacteria</taxon>
        <taxon>Rickettsiales</taxon>
        <taxon>Rickettsiaceae</taxon>
        <taxon>Rickettsieae</taxon>
        <taxon>Rickettsia</taxon>
        <taxon>spotted fever group</taxon>
    </lineage>
</organism>
<accession>Q4UJR2</accession>
<name>DAPE_RICFE</name>
<protein>
    <recommendedName>
        <fullName evidence="1">Succinyl-diaminopimelate desuccinylase</fullName>
        <shortName evidence="1">SDAP desuccinylase</shortName>
        <ecNumber evidence="1">3.5.1.18</ecNumber>
    </recommendedName>
    <alternativeName>
        <fullName evidence="1">N-succinyl-LL-2,6-diaminoheptanedioate amidohydrolase</fullName>
    </alternativeName>
</protein>
<reference key="1">
    <citation type="journal article" date="2005" name="PLoS Biol.">
        <title>The genome sequence of Rickettsia felis identifies the first putative conjugative plasmid in an obligate intracellular parasite.</title>
        <authorList>
            <person name="Ogata H."/>
            <person name="Renesto P."/>
            <person name="Audic S."/>
            <person name="Robert C."/>
            <person name="Blanc G."/>
            <person name="Fournier P.-E."/>
            <person name="Parinello H."/>
            <person name="Claverie J.-M."/>
            <person name="Raoult D."/>
        </authorList>
    </citation>
    <scope>NUCLEOTIDE SEQUENCE [LARGE SCALE GENOMIC DNA]</scope>
    <source>
        <strain>ATCC VR-1525 / URRWXCal2</strain>
    </source>
</reference>
<dbReference type="EC" id="3.5.1.18" evidence="1"/>
<dbReference type="EMBL" id="CP000053">
    <property type="protein sequence ID" value="AAY62227.1"/>
    <property type="molecule type" value="Genomic_DNA"/>
</dbReference>
<dbReference type="SMR" id="Q4UJR2"/>
<dbReference type="STRING" id="315456.RF_1376"/>
<dbReference type="KEGG" id="rfe:RF_1376"/>
<dbReference type="eggNOG" id="COG0624">
    <property type="taxonomic scope" value="Bacteria"/>
</dbReference>
<dbReference type="HOGENOM" id="CLU_021802_4_0_5"/>
<dbReference type="OrthoDB" id="9809784at2"/>
<dbReference type="UniPathway" id="UPA00034">
    <property type="reaction ID" value="UER00021"/>
</dbReference>
<dbReference type="Proteomes" id="UP000008548">
    <property type="component" value="Chromosome"/>
</dbReference>
<dbReference type="GO" id="GO:0008777">
    <property type="term" value="F:acetylornithine deacetylase activity"/>
    <property type="evidence" value="ECO:0007669"/>
    <property type="project" value="TreeGrafter"/>
</dbReference>
<dbReference type="GO" id="GO:0050897">
    <property type="term" value="F:cobalt ion binding"/>
    <property type="evidence" value="ECO:0007669"/>
    <property type="project" value="UniProtKB-UniRule"/>
</dbReference>
<dbReference type="GO" id="GO:0009014">
    <property type="term" value="F:succinyl-diaminopimelate desuccinylase activity"/>
    <property type="evidence" value="ECO:0007669"/>
    <property type="project" value="UniProtKB-UniRule"/>
</dbReference>
<dbReference type="GO" id="GO:0008270">
    <property type="term" value="F:zinc ion binding"/>
    <property type="evidence" value="ECO:0007669"/>
    <property type="project" value="UniProtKB-UniRule"/>
</dbReference>
<dbReference type="GO" id="GO:0019877">
    <property type="term" value="P:diaminopimelate biosynthetic process"/>
    <property type="evidence" value="ECO:0007669"/>
    <property type="project" value="UniProtKB-UniRule"/>
</dbReference>
<dbReference type="GO" id="GO:0006526">
    <property type="term" value="P:L-arginine biosynthetic process"/>
    <property type="evidence" value="ECO:0007669"/>
    <property type="project" value="TreeGrafter"/>
</dbReference>
<dbReference type="GO" id="GO:0009089">
    <property type="term" value="P:lysine biosynthetic process via diaminopimelate"/>
    <property type="evidence" value="ECO:0007669"/>
    <property type="project" value="UniProtKB-UniRule"/>
</dbReference>
<dbReference type="CDD" id="cd03891">
    <property type="entry name" value="M20_DapE_proteobac"/>
    <property type="match status" value="1"/>
</dbReference>
<dbReference type="Gene3D" id="3.30.70.360">
    <property type="match status" value="1"/>
</dbReference>
<dbReference type="Gene3D" id="3.40.630.10">
    <property type="entry name" value="Zn peptidases"/>
    <property type="match status" value="2"/>
</dbReference>
<dbReference type="HAMAP" id="MF_01690">
    <property type="entry name" value="DapE"/>
    <property type="match status" value="1"/>
</dbReference>
<dbReference type="InterPro" id="IPR001261">
    <property type="entry name" value="ArgE/DapE_CS"/>
</dbReference>
<dbReference type="InterPro" id="IPR036264">
    <property type="entry name" value="Bact_exopeptidase_dim_dom"/>
</dbReference>
<dbReference type="InterPro" id="IPR005941">
    <property type="entry name" value="DapE_proteobac"/>
</dbReference>
<dbReference type="InterPro" id="IPR002933">
    <property type="entry name" value="Peptidase_M20"/>
</dbReference>
<dbReference type="InterPro" id="IPR011650">
    <property type="entry name" value="Peptidase_M20_dimer"/>
</dbReference>
<dbReference type="InterPro" id="IPR050072">
    <property type="entry name" value="Peptidase_M20A"/>
</dbReference>
<dbReference type="NCBIfam" id="TIGR01246">
    <property type="entry name" value="dapE_proteo"/>
    <property type="match status" value="1"/>
</dbReference>
<dbReference type="NCBIfam" id="NF009557">
    <property type="entry name" value="PRK13009.1"/>
    <property type="match status" value="1"/>
</dbReference>
<dbReference type="PANTHER" id="PTHR43808">
    <property type="entry name" value="ACETYLORNITHINE DEACETYLASE"/>
    <property type="match status" value="1"/>
</dbReference>
<dbReference type="PANTHER" id="PTHR43808:SF31">
    <property type="entry name" value="N-ACETYL-L-CITRULLINE DEACETYLASE"/>
    <property type="match status" value="1"/>
</dbReference>
<dbReference type="Pfam" id="PF07687">
    <property type="entry name" value="M20_dimer"/>
    <property type="match status" value="1"/>
</dbReference>
<dbReference type="Pfam" id="PF01546">
    <property type="entry name" value="Peptidase_M20"/>
    <property type="match status" value="1"/>
</dbReference>
<dbReference type="SUPFAM" id="SSF55031">
    <property type="entry name" value="Bacterial exopeptidase dimerisation domain"/>
    <property type="match status" value="1"/>
</dbReference>
<dbReference type="SUPFAM" id="SSF53187">
    <property type="entry name" value="Zn-dependent exopeptidases"/>
    <property type="match status" value="1"/>
</dbReference>
<dbReference type="PROSITE" id="PS00759">
    <property type="entry name" value="ARGE_DAPE_CPG2_2"/>
    <property type="match status" value="1"/>
</dbReference>
<keyword id="KW-0028">Amino-acid biosynthesis</keyword>
<keyword id="KW-0170">Cobalt</keyword>
<keyword id="KW-0220">Diaminopimelate biosynthesis</keyword>
<keyword id="KW-0378">Hydrolase</keyword>
<keyword id="KW-0457">Lysine biosynthesis</keyword>
<keyword id="KW-0479">Metal-binding</keyword>
<keyword id="KW-0862">Zinc</keyword>
<evidence type="ECO:0000255" key="1">
    <source>
        <dbReference type="HAMAP-Rule" id="MF_01690"/>
    </source>
</evidence>
<sequence length="381" mass="42701">MYINYLKDLIGFKSVTPESDGAIEYIDDLLKQHGFKTEIKIFGDSKSEQATNLYAVFGSNEPNICFVGHVDVVPAGNHELWHNASPFKASHQDGKIYGRGAVDMKGAIACFLAASLDFIKNNTGFKGSISFLLTSDEEGKAKHGTKEMLQYIYDQGHKMDFAIVGEPTCEKEIGDTIKIGRRGSVNFKLNIEGLSGHVAYPHKANNPLPCLIKILNELTNIRLDKGTEFFQSSNLEVTNIDVGNNTSNVIPASTEASFNIRFNNLHSAETLAKQVEEIIKRYCKEYKVDYKLEYSSSADSFIQNPNDKIKDFADIVERVLKIKPEFSTSGGTSDARFVKDYCPLVEFGLLSETAHKINEYTKISDLQKLYDVYYNFLMEIL</sequence>
<gene>
    <name evidence="1" type="primary">dapE</name>
    <name type="ordered locus">RF_1376</name>
</gene>
<feature type="chain" id="PRO_0000375702" description="Succinyl-diaminopimelate desuccinylase">
    <location>
        <begin position="1"/>
        <end position="381"/>
    </location>
</feature>
<feature type="active site" evidence="1">
    <location>
        <position position="71"/>
    </location>
</feature>
<feature type="active site" description="Proton acceptor" evidence="1">
    <location>
        <position position="137"/>
    </location>
</feature>
<feature type="binding site" evidence="1">
    <location>
        <position position="69"/>
    </location>
    <ligand>
        <name>Zn(2+)</name>
        <dbReference type="ChEBI" id="CHEBI:29105"/>
        <label>1</label>
    </ligand>
</feature>
<feature type="binding site" evidence="1">
    <location>
        <position position="103"/>
    </location>
    <ligand>
        <name>Zn(2+)</name>
        <dbReference type="ChEBI" id="CHEBI:29105"/>
        <label>1</label>
    </ligand>
</feature>
<feature type="binding site" evidence="1">
    <location>
        <position position="103"/>
    </location>
    <ligand>
        <name>Zn(2+)</name>
        <dbReference type="ChEBI" id="CHEBI:29105"/>
        <label>2</label>
    </ligand>
</feature>
<feature type="binding site" evidence="1">
    <location>
        <position position="138"/>
    </location>
    <ligand>
        <name>Zn(2+)</name>
        <dbReference type="ChEBI" id="CHEBI:29105"/>
        <label>2</label>
    </ligand>
</feature>
<feature type="binding site" evidence="1">
    <location>
        <position position="166"/>
    </location>
    <ligand>
        <name>Zn(2+)</name>
        <dbReference type="ChEBI" id="CHEBI:29105"/>
        <label>1</label>
    </ligand>
</feature>
<feature type="binding site" evidence="1">
    <location>
        <position position="355"/>
    </location>
    <ligand>
        <name>Zn(2+)</name>
        <dbReference type="ChEBI" id="CHEBI:29105"/>
        <label>2</label>
    </ligand>
</feature>
<proteinExistence type="inferred from homology"/>